<accession>B7M874</accession>
<dbReference type="EC" id="1.3.5.2" evidence="1"/>
<dbReference type="EMBL" id="CU928160">
    <property type="protein sequence ID" value="CAQ97850.1"/>
    <property type="molecule type" value="Genomic_DNA"/>
</dbReference>
<dbReference type="RefSeq" id="WP_001295352.1">
    <property type="nucleotide sequence ID" value="NC_011741.1"/>
</dbReference>
<dbReference type="SMR" id="B7M874"/>
<dbReference type="GeneID" id="93776469"/>
<dbReference type="KEGG" id="ecr:ECIAI1_0986"/>
<dbReference type="HOGENOM" id="CLU_013640_2_0_6"/>
<dbReference type="UniPathway" id="UPA00070">
    <property type="reaction ID" value="UER00946"/>
</dbReference>
<dbReference type="GO" id="GO:0005737">
    <property type="term" value="C:cytoplasm"/>
    <property type="evidence" value="ECO:0007669"/>
    <property type="project" value="InterPro"/>
</dbReference>
<dbReference type="GO" id="GO:0005886">
    <property type="term" value="C:plasma membrane"/>
    <property type="evidence" value="ECO:0007669"/>
    <property type="project" value="UniProtKB-SubCell"/>
</dbReference>
<dbReference type="GO" id="GO:0106430">
    <property type="term" value="F:dihydroorotate dehydrogenase (quinone) activity"/>
    <property type="evidence" value="ECO:0007669"/>
    <property type="project" value="UniProtKB-EC"/>
</dbReference>
<dbReference type="GO" id="GO:0006207">
    <property type="term" value="P:'de novo' pyrimidine nucleobase biosynthetic process"/>
    <property type="evidence" value="ECO:0007669"/>
    <property type="project" value="InterPro"/>
</dbReference>
<dbReference type="GO" id="GO:0044205">
    <property type="term" value="P:'de novo' UMP biosynthetic process"/>
    <property type="evidence" value="ECO:0007669"/>
    <property type="project" value="UniProtKB-UniRule"/>
</dbReference>
<dbReference type="CDD" id="cd04738">
    <property type="entry name" value="DHOD_2_like"/>
    <property type="match status" value="1"/>
</dbReference>
<dbReference type="FunFam" id="3.20.20.70:FF:000028">
    <property type="entry name" value="Dihydroorotate dehydrogenase (quinone)"/>
    <property type="match status" value="1"/>
</dbReference>
<dbReference type="Gene3D" id="3.20.20.70">
    <property type="entry name" value="Aldolase class I"/>
    <property type="match status" value="1"/>
</dbReference>
<dbReference type="HAMAP" id="MF_00225">
    <property type="entry name" value="DHO_dh_type2"/>
    <property type="match status" value="1"/>
</dbReference>
<dbReference type="InterPro" id="IPR013785">
    <property type="entry name" value="Aldolase_TIM"/>
</dbReference>
<dbReference type="InterPro" id="IPR050074">
    <property type="entry name" value="DHO_dehydrogenase"/>
</dbReference>
<dbReference type="InterPro" id="IPR012135">
    <property type="entry name" value="Dihydroorotate_DH_1_2"/>
</dbReference>
<dbReference type="InterPro" id="IPR005719">
    <property type="entry name" value="Dihydroorotate_DH_2"/>
</dbReference>
<dbReference type="InterPro" id="IPR005720">
    <property type="entry name" value="Dihydroorotate_DH_cat"/>
</dbReference>
<dbReference type="InterPro" id="IPR001295">
    <property type="entry name" value="Dihydroorotate_DH_CS"/>
</dbReference>
<dbReference type="NCBIfam" id="NF003644">
    <property type="entry name" value="PRK05286.1-1"/>
    <property type="match status" value="1"/>
</dbReference>
<dbReference type="NCBIfam" id="NF003645">
    <property type="entry name" value="PRK05286.1-2"/>
    <property type="match status" value="1"/>
</dbReference>
<dbReference type="NCBIfam" id="NF003646">
    <property type="entry name" value="PRK05286.1-4"/>
    <property type="match status" value="1"/>
</dbReference>
<dbReference type="NCBIfam" id="NF003652">
    <property type="entry name" value="PRK05286.2-5"/>
    <property type="match status" value="1"/>
</dbReference>
<dbReference type="NCBIfam" id="TIGR01036">
    <property type="entry name" value="pyrD_sub2"/>
    <property type="match status" value="1"/>
</dbReference>
<dbReference type="PANTHER" id="PTHR48109:SF4">
    <property type="entry name" value="DIHYDROOROTATE DEHYDROGENASE (QUINONE), MITOCHONDRIAL"/>
    <property type="match status" value="1"/>
</dbReference>
<dbReference type="PANTHER" id="PTHR48109">
    <property type="entry name" value="DIHYDROOROTATE DEHYDROGENASE (QUINONE), MITOCHONDRIAL-RELATED"/>
    <property type="match status" value="1"/>
</dbReference>
<dbReference type="Pfam" id="PF01180">
    <property type="entry name" value="DHO_dh"/>
    <property type="match status" value="1"/>
</dbReference>
<dbReference type="PIRSF" id="PIRSF000164">
    <property type="entry name" value="DHO_oxidase"/>
    <property type="match status" value="1"/>
</dbReference>
<dbReference type="SUPFAM" id="SSF51395">
    <property type="entry name" value="FMN-linked oxidoreductases"/>
    <property type="match status" value="1"/>
</dbReference>
<dbReference type="PROSITE" id="PS00911">
    <property type="entry name" value="DHODEHASE_1"/>
    <property type="match status" value="1"/>
</dbReference>
<dbReference type="PROSITE" id="PS00912">
    <property type="entry name" value="DHODEHASE_2"/>
    <property type="match status" value="1"/>
</dbReference>
<reference key="1">
    <citation type="journal article" date="2009" name="PLoS Genet.">
        <title>Organised genome dynamics in the Escherichia coli species results in highly diverse adaptive paths.</title>
        <authorList>
            <person name="Touchon M."/>
            <person name="Hoede C."/>
            <person name="Tenaillon O."/>
            <person name="Barbe V."/>
            <person name="Baeriswyl S."/>
            <person name="Bidet P."/>
            <person name="Bingen E."/>
            <person name="Bonacorsi S."/>
            <person name="Bouchier C."/>
            <person name="Bouvet O."/>
            <person name="Calteau A."/>
            <person name="Chiapello H."/>
            <person name="Clermont O."/>
            <person name="Cruveiller S."/>
            <person name="Danchin A."/>
            <person name="Diard M."/>
            <person name="Dossat C."/>
            <person name="Karoui M.E."/>
            <person name="Frapy E."/>
            <person name="Garry L."/>
            <person name="Ghigo J.M."/>
            <person name="Gilles A.M."/>
            <person name="Johnson J."/>
            <person name="Le Bouguenec C."/>
            <person name="Lescat M."/>
            <person name="Mangenot S."/>
            <person name="Martinez-Jehanne V."/>
            <person name="Matic I."/>
            <person name="Nassif X."/>
            <person name="Oztas S."/>
            <person name="Petit M.A."/>
            <person name="Pichon C."/>
            <person name="Rouy Z."/>
            <person name="Ruf C.S."/>
            <person name="Schneider D."/>
            <person name="Tourret J."/>
            <person name="Vacherie B."/>
            <person name="Vallenet D."/>
            <person name="Medigue C."/>
            <person name="Rocha E.P.C."/>
            <person name="Denamur E."/>
        </authorList>
    </citation>
    <scope>NUCLEOTIDE SEQUENCE [LARGE SCALE GENOMIC DNA]</scope>
    <source>
        <strain>IAI1</strain>
    </source>
</reference>
<sequence length="336" mass="36775">MYYPFVRKALFQLDPERAHEFTFQQLRRITGTPFEALVRQKVPAKPVNCMGLTFKNPLGLAAGLDKDGECIDALGAMGFGSIEIGTVTPRPQPGNDKPRLFRLVDAEGLINRMGFNNLGVDNLVENVKKAHYDGVLGINIGKNKDTPVEQGKDDYLICMEKIYAYAGYIAINISSPNTPGLRTLQYGEALDDLLTAIKNKQNDLQAMHHKYVPIAVKIAPDLSEEELIQVADSLVRHNIDGVIATNTTLDRSLVQGMKNCDQTGGLSGRPLQLKSTEIIRRLSLELNGRLPIIGVGGIDSVIAAREKIAAGASLVQIYSGFIFKGPPLIKEIVTHI</sequence>
<keyword id="KW-1003">Cell membrane</keyword>
<keyword id="KW-0285">Flavoprotein</keyword>
<keyword id="KW-0288">FMN</keyword>
<keyword id="KW-0472">Membrane</keyword>
<keyword id="KW-0560">Oxidoreductase</keyword>
<keyword id="KW-0665">Pyrimidine biosynthesis</keyword>
<feature type="chain" id="PRO_1000195075" description="Dihydroorotate dehydrogenase (quinone)">
    <location>
        <begin position="1"/>
        <end position="336"/>
    </location>
</feature>
<feature type="active site" description="Nucleophile" evidence="1">
    <location>
        <position position="175"/>
    </location>
</feature>
<feature type="binding site" evidence="1">
    <location>
        <begin position="62"/>
        <end position="66"/>
    </location>
    <ligand>
        <name>FMN</name>
        <dbReference type="ChEBI" id="CHEBI:58210"/>
    </ligand>
</feature>
<feature type="binding site" evidence="1">
    <location>
        <position position="66"/>
    </location>
    <ligand>
        <name>substrate</name>
    </ligand>
</feature>
<feature type="binding site" evidence="1">
    <location>
        <position position="86"/>
    </location>
    <ligand>
        <name>FMN</name>
        <dbReference type="ChEBI" id="CHEBI:58210"/>
    </ligand>
</feature>
<feature type="binding site" evidence="1">
    <location>
        <begin position="111"/>
        <end position="115"/>
    </location>
    <ligand>
        <name>substrate</name>
    </ligand>
</feature>
<feature type="binding site" evidence="1">
    <location>
        <position position="139"/>
    </location>
    <ligand>
        <name>FMN</name>
        <dbReference type="ChEBI" id="CHEBI:58210"/>
    </ligand>
</feature>
<feature type="binding site" evidence="1">
    <location>
        <position position="172"/>
    </location>
    <ligand>
        <name>FMN</name>
        <dbReference type="ChEBI" id="CHEBI:58210"/>
    </ligand>
</feature>
<feature type="binding site" evidence="1">
    <location>
        <position position="172"/>
    </location>
    <ligand>
        <name>substrate</name>
    </ligand>
</feature>
<feature type="binding site" evidence="1">
    <location>
        <position position="177"/>
    </location>
    <ligand>
        <name>substrate</name>
    </ligand>
</feature>
<feature type="binding site" evidence="1">
    <location>
        <position position="217"/>
    </location>
    <ligand>
        <name>FMN</name>
        <dbReference type="ChEBI" id="CHEBI:58210"/>
    </ligand>
</feature>
<feature type="binding site" evidence="1">
    <location>
        <position position="245"/>
    </location>
    <ligand>
        <name>FMN</name>
        <dbReference type="ChEBI" id="CHEBI:58210"/>
    </ligand>
</feature>
<feature type="binding site" evidence="1">
    <location>
        <begin position="246"/>
        <end position="247"/>
    </location>
    <ligand>
        <name>substrate</name>
    </ligand>
</feature>
<feature type="binding site" evidence="1">
    <location>
        <position position="268"/>
    </location>
    <ligand>
        <name>FMN</name>
        <dbReference type="ChEBI" id="CHEBI:58210"/>
    </ligand>
</feature>
<feature type="binding site" evidence="1">
    <location>
        <position position="297"/>
    </location>
    <ligand>
        <name>FMN</name>
        <dbReference type="ChEBI" id="CHEBI:58210"/>
    </ligand>
</feature>
<feature type="binding site" evidence="1">
    <location>
        <begin position="318"/>
        <end position="319"/>
    </location>
    <ligand>
        <name>FMN</name>
        <dbReference type="ChEBI" id="CHEBI:58210"/>
    </ligand>
</feature>
<proteinExistence type="inferred from homology"/>
<protein>
    <recommendedName>
        <fullName evidence="1">Dihydroorotate dehydrogenase (quinone)</fullName>
        <ecNumber evidence="1">1.3.5.2</ecNumber>
    </recommendedName>
    <alternativeName>
        <fullName evidence="1">DHOdehase</fullName>
        <shortName evidence="1">DHOD</shortName>
        <shortName evidence="1">DHODase</shortName>
    </alternativeName>
    <alternativeName>
        <fullName evidence="1">Dihydroorotate oxidase</fullName>
    </alternativeName>
</protein>
<evidence type="ECO:0000255" key="1">
    <source>
        <dbReference type="HAMAP-Rule" id="MF_00225"/>
    </source>
</evidence>
<name>PYRD_ECO8A</name>
<comment type="function">
    <text evidence="1">Catalyzes the conversion of dihydroorotate to orotate with quinone as electron acceptor.</text>
</comment>
<comment type="catalytic activity">
    <reaction evidence="1">
        <text>(S)-dihydroorotate + a quinone = orotate + a quinol</text>
        <dbReference type="Rhea" id="RHEA:30187"/>
        <dbReference type="ChEBI" id="CHEBI:24646"/>
        <dbReference type="ChEBI" id="CHEBI:30839"/>
        <dbReference type="ChEBI" id="CHEBI:30864"/>
        <dbReference type="ChEBI" id="CHEBI:132124"/>
        <dbReference type="EC" id="1.3.5.2"/>
    </reaction>
</comment>
<comment type="cofactor">
    <cofactor evidence="1">
        <name>FMN</name>
        <dbReference type="ChEBI" id="CHEBI:58210"/>
    </cofactor>
    <text evidence="1">Binds 1 FMN per subunit.</text>
</comment>
<comment type="pathway">
    <text evidence="1">Pyrimidine metabolism; UMP biosynthesis via de novo pathway; orotate from (S)-dihydroorotate (quinone route): step 1/1.</text>
</comment>
<comment type="subunit">
    <text evidence="1">Monomer.</text>
</comment>
<comment type="subcellular location">
    <subcellularLocation>
        <location evidence="1">Cell membrane</location>
        <topology evidence="1">Peripheral membrane protein</topology>
    </subcellularLocation>
</comment>
<comment type="similarity">
    <text evidence="1">Belongs to the dihydroorotate dehydrogenase family. Type 2 subfamily.</text>
</comment>
<organism>
    <name type="scientific">Escherichia coli O8 (strain IAI1)</name>
    <dbReference type="NCBI Taxonomy" id="585034"/>
    <lineage>
        <taxon>Bacteria</taxon>
        <taxon>Pseudomonadati</taxon>
        <taxon>Pseudomonadota</taxon>
        <taxon>Gammaproteobacteria</taxon>
        <taxon>Enterobacterales</taxon>
        <taxon>Enterobacteriaceae</taxon>
        <taxon>Escherichia</taxon>
    </lineage>
</organism>
<gene>
    <name evidence="1" type="primary">pyrD</name>
    <name type="ordered locus">ECIAI1_0986</name>
</gene>